<comment type="function">
    <text evidence="1">Catalyzes the last two sequential reactions in the de novo biosynthetic pathway for UDP-N-acetylglucosamine (UDP-GlcNAc). The C-terminal domain catalyzes the transfer of acetyl group from acetyl coenzyme A to glucosamine-1-phosphate (GlcN-1-P) to produce N-acetylglucosamine-1-phosphate (GlcNAc-1-P), which is converted into UDP-GlcNAc by the transfer of uridine 5-monophosphate (from uridine 5-triphosphate), a reaction catalyzed by the N-terminal domain.</text>
</comment>
<comment type="catalytic activity">
    <reaction evidence="1">
        <text>alpha-D-glucosamine 1-phosphate + acetyl-CoA = N-acetyl-alpha-D-glucosamine 1-phosphate + CoA + H(+)</text>
        <dbReference type="Rhea" id="RHEA:13725"/>
        <dbReference type="ChEBI" id="CHEBI:15378"/>
        <dbReference type="ChEBI" id="CHEBI:57287"/>
        <dbReference type="ChEBI" id="CHEBI:57288"/>
        <dbReference type="ChEBI" id="CHEBI:57776"/>
        <dbReference type="ChEBI" id="CHEBI:58516"/>
        <dbReference type="EC" id="2.3.1.157"/>
    </reaction>
</comment>
<comment type="catalytic activity">
    <reaction evidence="1">
        <text>N-acetyl-alpha-D-glucosamine 1-phosphate + UTP + H(+) = UDP-N-acetyl-alpha-D-glucosamine + diphosphate</text>
        <dbReference type="Rhea" id="RHEA:13509"/>
        <dbReference type="ChEBI" id="CHEBI:15378"/>
        <dbReference type="ChEBI" id="CHEBI:33019"/>
        <dbReference type="ChEBI" id="CHEBI:46398"/>
        <dbReference type="ChEBI" id="CHEBI:57705"/>
        <dbReference type="ChEBI" id="CHEBI:57776"/>
        <dbReference type="EC" id="2.7.7.23"/>
    </reaction>
</comment>
<comment type="cofactor">
    <cofactor evidence="1">
        <name>Mg(2+)</name>
        <dbReference type="ChEBI" id="CHEBI:18420"/>
    </cofactor>
    <text evidence="1">Binds 1 Mg(2+) ion per subunit.</text>
</comment>
<comment type="pathway">
    <text evidence="1">Nucleotide-sugar biosynthesis; UDP-N-acetyl-alpha-D-glucosamine biosynthesis; N-acetyl-alpha-D-glucosamine 1-phosphate from alpha-D-glucosamine 6-phosphate (route II): step 2/2.</text>
</comment>
<comment type="pathway">
    <text evidence="1">Nucleotide-sugar biosynthesis; UDP-N-acetyl-alpha-D-glucosamine biosynthesis; UDP-N-acetyl-alpha-D-glucosamine from N-acetyl-alpha-D-glucosamine 1-phosphate: step 1/1.</text>
</comment>
<comment type="pathway">
    <text evidence="1">Bacterial outer membrane biogenesis; LPS lipid A biosynthesis.</text>
</comment>
<comment type="subunit">
    <text evidence="1">Homotrimer.</text>
</comment>
<comment type="subcellular location">
    <subcellularLocation>
        <location evidence="1">Cytoplasm</location>
    </subcellularLocation>
</comment>
<comment type="similarity">
    <text evidence="1">In the N-terminal section; belongs to the N-acetylglucosamine-1-phosphate uridyltransferase family.</text>
</comment>
<comment type="similarity">
    <text evidence="1">In the C-terminal section; belongs to the transferase hexapeptide repeat family.</text>
</comment>
<name>GLMU_SACD2</name>
<proteinExistence type="inferred from homology"/>
<evidence type="ECO:0000255" key="1">
    <source>
        <dbReference type="HAMAP-Rule" id="MF_01631"/>
    </source>
</evidence>
<keyword id="KW-0012">Acyltransferase</keyword>
<keyword id="KW-0133">Cell shape</keyword>
<keyword id="KW-0961">Cell wall biogenesis/degradation</keyword>
<keyword id="KW-0963">Cytoplasm</keyword>
<keyword id="KW-0460">Magnesium</keyword>
<keyword id="KW-0479">Metal-binding</keyword>
<keyword id="KW-0511">Multifunctional enzyme</keyword>
<keyword id="KW-0548">Nucleotidyltransferase</keyword>
<keyword id="KW-0573">Peptidoglycan synthesis</keyword>
<keyword id="KW-1185">Reference proteome</keyword>
<keyword id="KW-0677">Repeat</keyword>
<keyword id="KW-0808">Transferase</keyword>
<feature type="chain" id="PRO_0000244308" description="Bifunctional protein GlmU">
    <location>
        <begin position="1"/>
        <end position="451"/>
    </location>
</feature>
<feature type="region of interest" description="Pyrophosphorylase" evidence="1">
    <location>
        <begin position="1"/>
        <end position="225"/>
    </location>
</feature>
<feature type="region of interest" description="Linker" evidence="1">
    <location>
        <begin position="226"/>
        <end position="246"/>
    </location>
</feature>
<feature type="region of interest" description="N-acetyltransferase" evidence="1">
    <location>
        <begin position="247"/>
        <end position="451"/>
    </location>
</feature>
<feature type="active site" description="Proton acceptor" evidence="1">
    <location>
        <position position="359"/>
    </location>
</feature>
<feature type="binding site" evidence="1">
    <location>
        <begin position="7"/>
        <end position="10"/>
    </location>
    <ligand>
        <name>UDP-N-acetyl-alpha-D-glucosamine</name>
        <dbReference type="ChEBI" id="CHEBI:57705"/>
    </ligand>
</feature>
<feature type="binding site" evidence="1">
    <location>
        <position position="21"/>
    </location>
    <ligand>
        <name>UDP-N-acetyl-alpha-D-glucosamine</name>
        <dbReference type="ChEBI" id="CHEBI:57705"/>
    </ligand>
</feature>
<feature type="binding site" evidence="1">
    <location>
        <position position="72"/>
    </location>
    <ligand>
        <name>UDP-N-acetyl-alpha-D-glucosamine</name>
        <dbReference type="ChEBI" id="CHEBI:57705"/>
    </ligand>
</feature>
<feature type="binding site" evidence="1">
    <location>
        <begin position="77"/>
        <end position="78"/>
    </location>
    <ligand>
        <name>UDP-N-acetyl-alpha-D-glucosamine</name>
        <dbReference type="ChEBI" id="CHEBI:57705"/>
    </ligand>
</feature>
<feature type="binding site" evidence="1">
    <location>
        <begin position="99"/>
        <end position="101"/>
    </location>
    <ligand>
        <name>UDP-N-acetyl-alpha-D-glucosamine</name>
        <dbReference type="ChEBI" id="CHEBI:57705"/>
    </ligand>
</feature>
<feature type="binding site" evidence="1">
    <location>
        <position position="101"/>
    </location>
    <ligand>
        <name>Mg(2+)</name>
        <dbReference type="ChEBI" id="CHEBI:18420"/>
    </ligand>
</feature>
<feature type="binding site" evidence="1">
    <location>
        <position position="136"/>
    </location>
    <ligand>
        <name>UDP-N-acetyl-alpha-D-glucosamine</name>
        <dbReference type="ChEBI" id="CHEBI:57705"/>
    </ligand>
</feature>
<feature type="binding site" evidence="1">
    <location>
        <position position="150"/>
    </location>
    <ligand>
        <name>UDP-N-acetyl-alpha-D-glucosamine</name>
        <dbReference type="ChEBI" id="CHEBI:57705"/>
    </ligand>
</feature>
<feature type="binding site" evidence="1">
    <location>
        <position position="165"/>
    </location>
    <ligand>
        <name>UDP-N-acetyl-alpha-D-glucosamine</name>
        <dbReference type="ChEBI" id="CHEBI:57705"/>
    </ligand>
</feature>
<feature type="binding site" evidence="1">
    <location>
        <position position="223"/>
    </location>
    <ligand>
        <name>Mg(2+)</name>
        <dbReference type="ChEBI" id="CHEBI:18420"/>
    </ligand>
</feature>
<feature type="binding site" evidence="1">
    <location>
        <position position="223"/>
    </location>
    <ligand>
        <name>UDP-N-acetyl-alpha-D-glucosamine</name>
        <dbReference type="ChEBI" id="CHEBI:57705"/>
    </ligand>
</feature>
<feature type="binding site" evidence="1">
    <location>
        <position position="329"/>
    </location>
    <ligand>
        <name>UDP-N-acetyl-alpha-D-glucosamine</name>
        <dbReference type="ChEBI" id="CHEBI:57705"/>
    </ligand>
</feature>
<feature type="binding site" evidence="1">
    <location>
        <position position="347"/>
    </location>
    <ligand>
        <name>UDP-N-acetyl-alpha-D-glucosamine</name>
        <dbReference type="ChEBI" id="CHEBI:57705"/>
    </ligand>
</feature>
<feature type="binding site" evidence="1">
    <location>
        <position position="362"/>
    </location>
    <ligand>
        <name>UDP-N-acetyl-alpha-D-glucosamine</name>
        <dbReference type="ChEBI" id="CHEBI:57705"/>
    </ligand>
</feature>
<feature type="binding site" evidence="1">
    <location>
        <position position="373"/>
    </location>
    <ligand>
        <name>UDP-N-acetyl-alpha-D-glucosamine</name>
        <dbReference type="ChEBI" id="CHEBI:57705"/>
    </ligand>
</feature>
<feature type="binding site" evidence="1">
    <location>
        <position position="376"/>
    </location>
    <ligand>
        <name>acetyl-CoA</name>
        <dbReference type="ChEBI" id="CHEBI:57288"/>
    </ligand>
</feature>
<feature type="binding site" evidence="1">
    <location>
        <begin position="382"/>
        <end position="383"/>
    </location>
    <ligand>
        <name>acetyl-CoA</name>
        <dbReference type="ChEBI" id="CHEBI:57288"/>
    </ligand>
</feature>
<feature type="binding site" evidence="1">
    <location>
        <position position="401"/>
    </location>
    <ligand>
        <name>acetyl-CoA</name>
        <dbReference type="ChEBI" id="CHEBI:57288"/>
    </ligand>
</feature>
<feature type="binding site" evidence="1">
    <location>
        <position position="419"/>
    </location>
    <ligand>
        <name>acetyl-CoA</name>
        <dbReference type="ChEBI" id="CHEBI:57288"/>
    </ligand>
</feature>
<feature type="binding site" evidence="1">
    <location>
        <position position="436"/>
    </location>
    <ligand>
        <name>acetyl-CoA</name>
        <dbReference type="ChEBI" id="CHEBI:57288"/>
    </ligand>
</feature>
<organism>
    <name type="scientific">Saccharophagus degradans (strain 2-40 / ATCC 43961 / DSM 17024)</name>
    <dbReference type="NCBI Taxonomy" id="203122"/>
    <lineage>
        <taxon>Bacteria</taxon>
        <taxon>Pseudomonadati</taxon>
        <taxon>Pseudomonadota</taxon>
        <taxon>Gammaproteobacteria</taxon>
        <taxon>Cellvibrionales</taxon>
        <taxon>Cellvibrionaceae</taxon>
        <taxon>Saccharophagus</taxon>
    </lineage>
</organism>
<sequence length="451" mass="47900">MLEIIILAAGKGTRMRSDKPKVLHTLAGKPFLEHVLDRSAELNADKVHVIIGHGADMVREALAGRDVNFVEQTEQLGTGHAVLQVLPHLNPESDTLILYGDVPLTKTDTLAELRAKVSDSSMGLLTVNLADPNGYGRIVRTNGSVTAIVEQKDANPEQLKIDEVNTGVMAVKSAHLAKWLPALSNDNAQGEYYLTDIIAMSSADDIAIETAQPKDEYEVLGVNNRLQQAELERIFQRQVAEELMVAGATLLDPARLDCRGSIEVGRDCVIDVNCVFEGKVVLGNNVHIGPNCVISDSTIGDGTVILANSILEESTLAENCNIGPFARLRPGSQLASKAKIGNFVETKKAVIGEGSKVNHLSYVGDAEIGAGVNIGAGTITCNYDGVNKSKTTIEDGAFIGSNSALVAPVTVGKNATVGAGSIVTKNSEEGDLIIARAKQSNIKGWARPVKK</sequence>
<protein>
    <recommendedName>
        <fullName evidence="1">Bifunctional protein GlmU</fullName>
    </recommendedName>
    <domain>
        <recommendedName>
            <fullName evidence="1">UDP-N-acetylglucosamine pyrophosphorylase</fullName>
            <ecNumber evidence="1">2.7.7.23</ecNumber>
        </recommendedName>
        <alternativeName>
            <fullName evidence="1">N-acetylglucosamine-1-phosphate uridyltransferase</fullName>
        </alternativeName>
    </domain>
    <domain>
        <recommendedName>
            <fullName evidence="1">Glucosamine-1-phosphate N-acetyltransferase</fullName>
            <ecNumber evidence="1">2.3.1.157</ecNumber>
        </recommendedName>
    </domain>
</protein>
<dbReference type="EC" id="2.7.7.23" evidence="1"/>
<dbReference type="EC" id="2.3.1.157" evidence="1"/>
<dbReference type="EMBL" id="CP000282">
    <property type="protein sequence ID" value="ABD83214.1"/>
    <property type="molecule type" value="Genomic_DNA"/>
</dbReference>
<dbReference type="RefSeq" id="WP_011470429.1">
    <property type="nucleotide sequence ID" value="NC_007912.1"/>
</dbReference>
<dbReference type="SMR" id="Q21DL5"/>
<dbReference type="STRING" id="203122.Sde_3959"/>
<dbReference type="GeneID" id="98615552"/>
<dbReference type="KEGG" id="sde:Sde_3959"/>
<dbReference type="eggNOG" id="COG1207">
    <property type="taxonomic scope" value="Bacteria"/>
</dbReference>
<dbReference type="HOGENOM" id="CLU_029499_15_2_6"/>
<dbReference type="OrthoDB" id="9775031at2"/>
<dbReference type="UniPathway" id="UPA00113">
    <property type="reaction ID" value="UER00532"/>
</dbReference>
<dbReference type="UniPathway" id="UPA00113">
    <property type="reaction ID" value="UER00533"/>
</dbReference>
<dbReference type="UniPathway" id="UPA00973"/>
<dbReference type="Proteomes" id="UP000001947">
    <property type="component" value="Chromosome"/>
</dbReference>
<dbReference type="GO" id="GO:0005737">
    <property type="term" value="C:cytoplasm"/>
    <property type="evidence" value="ECO:0007669"/>
    <property type="project" value="UniProtKB-SubCell"/>
</dbReference>
<dbReference type="GO" id="GO:0016020">
    <property type="term" value="C:membrane"/>
    <property type="evidence" value="ECO:0007669"/>
    <property type="project" value="GOC"/>
</dbReference>
<dbReference type="GO" id="GO:0019134">
    <property type="term" value="F:glucosamine-1-phosphate N-acetyltransferase activity"/>
    <property type="evidence" value="ECO:0007669"/>
    <property type="project" value="UniProtKB-UniRule"/>
</dbReference>
<dbReference type="GO" id="GO:0000287">
    <property type="term" value="F:magnesium ion binding"/>
    <property type="evidence" value="ECO:0007669"/>
    <property type="project" value="UniProtKB-UniRule"/>
</dbReference>
<dbReference type="GO" id="GO:0003977">
    <property type="term" value="F:UDP-N-acetylglucosamine diphosphorylase activity"/>
    <property type="evidence" value="ECO:0007669"/>
    <property type="project" value="UniProtKB-UniRule"/>
</dbReference>
<dbReference type="GO" id="GO:0000902">
    <property type="term" value="P:cell morphogenesis"/>
    <property type="evidence" value="ECO:0007669"/>
    <property type="project" value="UniProtKB-UniRule"/>
</dbReference>
<dbReference type="GO" id="GO:0071555">
    <property type="term" value="P:cell wall organization"/>
    <property type="evidence" value="ECO:0007669"/>
    <property type="project" value="UniProtKB-KW"/>
</dbReference>
<dbReference type="GO" id="GO:0009245">
    <property type="term" value="P:lipid A biosynthetic process"/>
    <property type="evidence" value="ECO:0007669"/>
    <property type="project" value="UniProtKB-UniRule"/>
</dbReference>
<dbReference type="GO" id="GO:0009252">
    <property type="term" value="P:peptidoglycan biosynthetic process"/>
    <property type="evidence" value="ECO:0007669"/>
    <property type="project" value="UniProtKB-UniRule"/>
</dbReference>
<dbReference type="GO" id="GO:0008360">
    <property type="term" value="P:regulation of cell shape"/>
    <property type="evidence" value="ECO:0007669"/>
    <property type="project" value="UniProtKB-KW"/>
</dbReference>
<dbReference type="GO" id="GO:0006048">
    <property type="term" value="P:UDP-N-acetylglucosamine biosynthetic process"/>
    <property type="evidence" value="ECO:0007669"/>
    <property type="project" value="UniProtKB-UniPathway"/>
</dbReference>
<dbReference type="CDD" id="cd02540">
    <property type="entry name" value="GT2_GlmU_N_bac"/>
    <property type="match status" value="1"/>
</dbReference>
<dbReference type="CDD" id="cd03353">
    <property type="entry name" value="LbH_GlmU_C"/>
    <property type="match status" value="1"/>
</dbReference>
<dbReference type="Gene3D" id="2.160.10.10">
    <property type="entry name" value="Hexapeptide repeat proteins"/>
    <property type="match status" value="1"/>
</dbReference>
<dbReference type="Gene3D" id="3.90.550.10">
    <property type="entry name" value="Spore Coat Polysaccharide Biosynthesis Protein SpsA, Chain A"/>
    <property type="match status" value="1"/>
</dbReference>
<dbReference type="HAMAP" id="MF_01631">
    <property type="entry name" value="GlmU"/>
    <property type="match status" value="1"/>
</dbReference>
<dbReference type="InterPro" id="IPR005882">
    <property type="entry name" value="Bifunctional_GlmU"/>
</dbReference>
<dbReference type="InterPro" id="IPR050065">
    <property type="entry name" value="GlmU-like"/>
</dbReference>
<dbReference type="InterPro" id="IPR038009">
    <property type="entry name" value="GlmU_C_LbH"/>
</dbReference>
<dbReference type="InterPro" id="IPR001451">
    <property type="entry name" value="Hexapep"/>
</dbReference>
<dbReference type="InterPro" id="IPR025877">
    <property type="entry name" value="MobA-like_NTP_Trfase"/>
</dbReference>
<dbReference type="InterPro" id="IPR029044">
    <property type="entry name" value="Nucleotide-diphossugar_trans"/>
</dbReference>
<dbReference type="InterPro" id="IPR011004">
    <property type="entry name" value="Trimer_LpxA-like_sf"/>
</dbReference>
<dbReference type="NCBIfam" id="TIGR01173">
    <property type="entry name" value="glmU"/>
    <property type="match status" value="1"/>
</dbReference>
<dbReference type="PANTHER" id="PTHR43584:SF3">
    <property type="entry name" value="BIFUNCTIONAL PROTEIN GLMU"/>
    <property type="match status" value="1"/>
</dbReference>
<dbReference type="PANTHER" id="PTHR43584">
    <property type="entry name" value="NUCLEOTIDYL TRANSFERASE"/>
    <property type="match status" value="1"/>
</dbReference>
<dbReference type="Pfam" id="PF00132">
    <property type="entry name" value="Hexapep"/>
    <property type="match status" value="1"/>
</dbReference>
<dbReference type="Pfam" id="PF14602">
    <property type="entry name" value="Hexapep_2"/>
    <property type="match status" value="1"/>
</dbReference>
<dbReference type="Pfam" id="PF12804">
    <property type="entry name" value="NTP_transf_3"/>
    <property type="match status" value="1"/>
</dbReference>
<dbReference type="SUPFAM" id="SSF53448">
    <property type="entry name" value="Nucleotide-diphospho-sugar transferases"/>
    <property type="match status" value="1"/>
</dbReference>
<dbReference type="SUPFAM" id="SSF51161">
    <property type="entry name" value="Trimeric LpxA-like enzymes"/>
    <property type="match status" value="1"/>
</dbReference>
<accession>Q21DL5</accession>
<reference key="1">
    <citation type="journal article" date="2008" name="PLoS Genet.">
        <title>Complete genome sequence of the complex carbohydrate-degrading marine bacterium, Saccharophagus degradans strain 2-40 T.</title>
        <authorList>
            <person name="Weiner R.M."/>
            <person name="Taylor L.E. II"/>
            <person name="Henrissat B."/>
            <person name="Hauser L."/>
            <person name="Land M."/>
            <person name="Coutinho P.M."/>
            <person name="Rancurel C."/>
            <person name="Saunders E.H."/>
            <person name="Longmire A.G."/>
            <person name="Zhang H."/>
            <person name="Bayer E.A."/>
            <person name="Gilbert H.J."/>
            <person name="Larimer F."/>
            <person name="Zhulin I.B."/>
            <person name="Ekborg N.A."/>
            <person name="Lamed R."/>
            <person name="Richardson P.M."/>
            <person name="Borovok I."/>
            <person name="Hutcheson S."/>
        </authorList>
    </citation>
    <scope>NUCLEOTIDE SEQUENCE [LARGE SCALE GENOMIC DNA]</scope>
    <source>
        <strain>2-40 / ATCC 43961 / DSM 17024</strain>
    </source>
</reference>
<gene>
    <name evidence="1" type="primary">glmU</name>
    <name type="ordered locus">Sde_3959</name>
</gene>